<protein>
    <recommendedName>
        <fullName>Probable 5-dehydro-4-deoxyglucarate dehydratase 1</fullName>
        <ecNumber>4.2.1.41</ecNumber>
    </recommendedName>
    <alternativeName>
        <fullName>5-keto-4-deoxy-glucarate dehydratase 1</fullName>
        <shortName>KDGDH 1</shortName>
    </alternativeName>
</protein>
<keyword id="KW-0456">Lyase</keyword>
<keyword id="KW-1185">Reference proteome</keyword>
<comment type="catalytic activity">
    <reaction>
        <text>5-dehydro-4-deoxy-D-glucarate + H(+) = 2,5-dioxopentanoate + CO2 + H2O</text>
        <dbReference type="Rhea" id="RHEA:24608"/>
        <dbReference type="ChEBI" id="CHEBI:15377"/>
        <dbReference type="ChEBI" id="CHEBI:15378"/>
        <dbReference type="ChEBI" id="CHEBI:16526"/>
        <dbReference type="ChEBI" id="CHEBI:42819"/>
        <dbReference type="ChEBI" id="CHEBI:58136"/>
        <dbReference type="EC" id="4.2.1.41"/>
    </reaction>
</comment>
<comment type="pathway">
    <text>Carbohydrate acid metabolism; D-glucarate degradation; 2,5-dioxopentanoate from D-glucarate: step 2/2.</text>
</comment>
<comment type="similarity">
    <text evidence="1">Belongs to the DapA family.</text>
</comment>
<evidence type="ECO:0000305" key="1"/>
<name>KDGD1_STRCO</name>
<reference key="1">
    <citation type="journal article" date="2002" name="Nature">
        <title>Complete genome sequence of the model actinomycete Streptomyces coelicolor A3(2).</title>
        <authorList>
            <person name="Bentley S.D."/>
            <person name="Chater K.F."/>
            <person name="Cerdeno-Tarraga A.-M."/>
            <person name="Challis G.L."/>
            <person name="Thomson N.R."/>
            <person name="James K.D."/>
            <person name="Harris D.E."/>
            <person name="Quail M.A."/>
            <person name="Kieser H."/>
            <person name="Harper D."/>
            <person name="Bateman A."/>
            <person name="Brown S."/>
            <person name="Chandra G."/>
            <person name="Chen C.W."/>
            <person name="Collins M."/>
            <person name="Cronin A."/>
            <person name="Fraser A."/>
            <person name="Goble A."/>
            <person name="Hidalgo J."/>
            <person name="Hornsby T."/>
            <person name="Howarth S."/>
            <person name="Huang C.-H."/>
            <person name="Kieser T."/>
            <person name="Larke L."/>
            <person name="Murphy L.D."/>
            <person name="Oliver K."/>
            <person name="O'Neil S."/>
            <person name="Rabbinowitsch E."/>
            <person name="Rajandream M.A."/>
            <person name="Rutherford K.M."/>
            <person name="Rutter S."/>
            <person name="Seeger K."/>
            <person name="Saunders D."/>
            <person name="Sharp S."/>
            <person name="Squares R."/>
            <person name="Squares S."/>
            <person name="Taylor K."/>
            <person name="Warren T."/>
            <person name="Wietzorrek A."/>
            <person name="Woodward J.R."/>
            <person name="Barrell B.G."/>
            <person name="Parkhill J."/>
            <person name="Hopwood D.A."/>
        </authorList>
    </citation>
    <scope>NUCLEOTIDE SEQUENCE [LARGE SCALE GENOMIC DNA]</scope>
    <source>
        <strain>ATCC BAA-471 / A3(2) / M145</strain>
    </source>
</reference>
<accession>Q9X9X7</accession>
<proteinExistence type="inferred from homology"/>
<feature type="chain" id="PRO_0000103241" description="Probable 5-dehydro-4-deoxyglucarate dehydratase 1">
    <location>
        <begin position="1"/>
        <end position="316"/>
    </location>
</feature>
<sequence>MTSAPLAARLTVPSGPLFFPVTAYGPDGGLDLDVYRTHVRRGVEAGAAAVFACCGTGEFHALTPEEFAACVRAAVEESAGRVPVLAGAGYGTALAVRYARLAEQAGADGLLAMPPYLVLAGQEGLVRHYREVAAATPLPVIVYQRDNAVFTPESVVELARTDGVVGLKDGLGDLDLMQRIVSAVRTELPGEEFLYFNGLPTAEQTQLSYRALGVPLYSSAVFCFAPEIAVAFHRALREGDDATVHRLLDGFYRPFVELRARGRGYAVALVKAGVRLRGLDVGEVRTPLQEPAEEHVKQLVQIIERGQVLVEEGAGR</sequence>
<gene>
    <name type="ordered locus">SCO1895</name>
    <name type="ORF">SCI7.13c</name>
</gene>
<dbReference type="EC" id="4.2.1.41"/>
<dbReference type="EMBL" id="AL939110">
    <property type="protein sequence ID" value="CAB46396.1"/>
    <property type="molecule type" value="Genomic_DNA"/>
</dbReference>
<dbReference type="PIR" id="T36909">
    <property type="entry name" value="T36909"/>
</dbReference>
<dbReference type="RefSeq" id="NP_626161.1">
    <property type="nucleotide sequence ID" value="NC_003888.3"/>
</dbReference>
<dbReference type="RefSeq" id="WP_003976924.1">
    <property type="nucleotide sequence ID" value="NZ_VNID01000001.1"/>
</dbReference>
<dbReference type="SMR" id="Q9X9X7"/>
<dbReference type="STRING" id="100226.gene:17759492"/>
<dbReference type="PaxDb" id="100226-SCO1895"/>
<dbReference type="KEGG" id="sco:SCO1895"/>
<dbReference type="PATRIC" id="fig|100226.15.peg.1920"/>
<dbReference type="eggNOG" id="COG0329">
    <property type="taxonomic scope" value="Bacteria"/>
</dbReference>
<dbReference type="HOGENOM" id="CLU_049343_5_2_11"/>
<dbReference type="InParanoid" id="Q9X9X7"/>
<dbReference type="OrthoDB" id="8995637at2"/>
<dbReference type="PhylomeDB" id="Q9X9X7"/>
<dbReference type="UniPathway" id="UPA00564">
    <property type="reaction ID" value="UER00628"/>
</dbReference>
<dbReference type="Proteomes" id="UP000001973">
    <property type="component" value="Chromosome"/>
</dbReference>
<dbReference type="GO" id="GO:0008840">
    <property type="term" value="F:4-hydroxy-tetrahydrodipicolinate synthase activity"/>
    <property type="evidence" value="ECO:0000318"/>
    <property type="project" value="GO_Central"/>
</dbReference>
<dbReference type="GO" id="GO:0047448">
    <property type="term" value="F:5-dehydro-4-deoxyglucarate dehydratase activity"/>
    <property type="evidence" value="ECO:0007669"/>
    <property type="project" value="UniProtKB-UniRule"/>
</dbReference>
<dbReference type="GO" id="GO:0042838">
    <property type="term" value="P:D-glucarate catabolic process"/>
    <property type="evidence" value="ECO:0007669"/>
    <property type="project" value="UniProtKB-UniRule"/>
</dbReference>
<dbReference type="CDD" id="cd00951">
    <property type="entry name" value="KDGDH"/>
    <property type="match status" value="1"/>
</dbReference>
<dbReference type="Gene3D" id="3.20.20.70">
    <property type="entry name" value="Aldolase class I"/>
    <property type="match status" value="1"/>
</dbReference>
<dbReference type="HAMAP" id="MF_00694">
    <property type="entry name" value="KDGDH"/>
    <property type="match status" value="1"/>
</dbReference>
<dbReference type="InterPro" id="IPR013785">
    <property type="entry name" value="Aldolase_TIM"/>
</dbReference>
<dbReference type="InterPro" id="IPR002220">
    <property type="entry name" value="DapA-like"/>
</dbReference>
<dbReference type="InterPro" id="IPR017655">
    <property type="entry name" value="Dehydro-deoxyglucarate_dehyd"/>
</dbReference>
<dbReference type="NCBIfam" id="NF002958">
    <property type="entry name" value="PRK03620.1"/>
    <property type="match status" value="1"/>
</dbReference>
<dbReference type="PANTHER" id="PTHR12128:SF19">
    <property type="entry name" value="5-DEHYDRO-4-DEOXYGLUCARATE DEHYDRATASE 2-RELATED"/>
    <property type="match status" value="1"/>
</dbReference>
<dbReference type="PANTHER" id="PTHR12128">
    <property type="entry name" value="DIHYDRODIPICOLINATE SYNTHASE"/>
    <property type="match status" value="1"/>
</dbReference>
<dbReference type="Pfam" id="PF00701">
    <property type="entry name" value="DHDPS"/>
    <property type="match status" value="1"/>
</dbReference>
<dbReference type="PIRSF" id="PIRSF001365">
    <property type="entry name" value="DHDPS"/>
    <property type="match status" value="1"/>
</dbReference>
<dbReference type="SMART" id="SM01130">
    <property type="entry name" value="DHDPS"/>
    <property type="match status" value="1"/>
</dbReference>
<dbReference type="SUPFAM" id="SSF51569">
    <property type="entry name" value="Aldolase"/>
    <property type="match status" value="1"/>
</dbReference>
<organism>
    <name type="scientific">Streptomyces coelicolor (strain ATCC BAA-471 / A3(2) / M145)</name>
    <dbReference type="NCBI Taxonomy" id="100226"/>
    <lineage>
        <taxon>Bacteria</taxon>
        <taxon>Bacillati</taxon>
        <taxon>Actinomycetota</taxon>
        <taxon>Actinomycetes</taxon>
        <taxon>Kitasatosporales</taxon>
        <taxon>Streptomycetaceae</taxon>
        <taxon>Streptomyces</taxon>
        <taxon>Streptomyces albidoflavus group</taxon>
    </lineage>
</organism>